<comment type="function">
    <text evidence="1">DNA-dependent RNA polymerase catalyzes the transcription of DNA into RNA using the four ribonucleoside triphosphates as substrates.</text>
</comment>
<comment type="catalytic activity">
    <reaction evidence="1">
        <text>RNA(n) + a ribonucleoside 5'-triphosphate = RNA(n+1) + diphosphate</text>
        <dbReference type="Rhea" id="RHEA:21248"/>
        <dbReference type="Rhea" id="RHEA-COMP:14527"/>
        <dbReference type="Rhea" id="RHEA-COMP:17342"/>
        <dbReference type="ChEBI" id="CHEBI:33019"/>
        <dbReference type="ChEBI" id="CHEBI:61557"/>
        <dbReference type="ChEBI" id="CHEBI:140395"/>
        <dbReference type="EC" id="2.7.7.6"/>
    </reaction>
</comment>
<comment type="cofactor">
    <cofactor evidence="1">
        <name>Mg(2+)</name>
        <dbReference type="ChEBI" id="CHEBI:18420"/>
    </cofactor>
    <text evidence="1">Binds 1 Mg(2+) ion per subunit.</text>
</comment>
<comment type="cofactor">
    <cofactor evidence="1">
        <name>Zn(2+)</name>
        <dbReference type="ChEBI" id="CHEBI:29105"/>
    </cofactor>
    <text evidence="1">Binds 2 Zn(2+) ions per subunit.</text>
</comment>
<comment type="subunit">
    <text evidence="1">The RNAP catalytic core consists of 2 alpha, 1 beta, 1 beta' and 1 omega subunit. When a sigma factor is associated with the core the holoenzyme is formed, which can initiate transcription.</text>
</comment>
<comment type="similarity">
    <text evidence="1">Belongs to the RNA polymerase beta' chain family.</text>
</comment>
<organism>
    <name type="scientific">Oleidesulfovibrio alaskensis (strain ATCC BAA-1058 / DSM 17464 / G20)</name>
    <name type="common">Desulfovibrio alaskensis</name>
    <dbReference type="NCBI Taxonomy" id="207559"/>
    <lineage>
        <taxon>Bacteria</taxon>
        <taxon>Pseudomonadati</taxon>
        <taxon>Thermodesulfobacteriota</taxon>
        <taxon>Desulfovibrionia</taxon>
        <taxon>Desulfovibrionales</taxon>
        <taxon>Desulfovibrionaceae</taxon>
        <taxon>Oleidesulfovibrio</taxon>
    </lineage>
</organism>
<reference key="1">
    <citation type="journal article" date="2011" name="J. Bacteriol.">
        <title>Complete genome sequence and updated annotation of Desulfovibrio alaskensis G20.</title>
        <authorList>
            <person name="Hauser L.J."/>
            <person name="Land M.L."/>
            <person name="Brown S.D."/>
            <person name="Larimer F."/>
            <person name="Keller K.L."/>
            <person name="Rapp-Giles B.J."/>
            <person name="Price M.N."/>
            <person name="Lin M."/>
            <person name="Bruce D.C."/>
            <person name="Detter J.C."/>
            <person name="Tapia R."/>
            <person name="Han C.S."/>
            <person name="Goodwin L.A."/>
            <person name="Cheng J.F."/>
            <person name="Pitluck S."/>
            <person name="Copeland A."/>
            <person name="Lucas S."/>
            <person name="Nolan M."/>
            <person name="Lapidus A.L."/>
            <person name="Palumbo A.V."/>
            <person name="Wall J.D."/>
        </authorList>
    </citation>
    <scope>NUCLEOTIDE SEQUENCE [LARGE SCALE GENOMIC DNA]</scope>
    <source>
        <strain>ATCC BAA-1058 / DSM 17464 / G20</strain>
    </source>
</reference>
<keyword id="KW-0240">DNA-directed RNA polymerase</keyword>
<keyword id="KW-0460">Magnesium</keyword>
<keyword id="KW-0479">Metal-binding</keyword>
<keyword id="KW-0548">Nucleotidyltransferase</keyword>
<keyword id="KW-1185">Reference proteome</keyword>
<keyword id="KW-0804">Transcription</keyword>
<keyword id="KW-0808">Transferase</keyword>
<keyword id="KW-0862">Zinc</keyword>
<feature type="chain" id="PRO_0000225531" description="DNA-directed RNA polymerase subunit beta'">
    <location>
        <begin position="1"/>
        <end position="1386"/>
    </location>
</feature>
<feature type="binding site" evidence="1">
    <location>
        <position position="75"/>
    </location>
    <ligand>
        <name>Zn(2+)</name>
        <dbReference type="ChEBI" id="CHEBI:29105"/>
        <label>1</label>
    </ligand>
</feature>
<feature type="binding site" evidence="1">
    <location>
        <position position="77"/>
    </location>
    <ligand>
        <name>Zn(2+)</name>
        <dbReference type="ChEBI" id="CHEBI:29105"/>
        <label>1</label>
    </ligand>
</feature>
<feature type="binding site" evidence="1">
    <location>
        <position position="90"/>
    </location>
    <ligand>
        <name>Zn(2+)</name>
        <dbReference type="ChEBI" id="CHEBI:29105"/>
        <label>1</label>
    </ligand>
</feature>
<feature type="binding site" evidence="1">
    <location>
        <position position="93"/>
    </location>
    <ligand>
        <name>Zn(2+)</name>
        <dbReference type="ChEBI" id="CHEBI:29105"/>
        <label>1</label>
    </ligand>
</feature>
<feature type="binding site" evidence="1">
    <location>
        <position position="466"/>
    </location>
    <ligand>
        <name>Mg(2+)</name>
        <dbReference type="ChEBI" id="CHEBI:18420"/>
    </ligand>
</feature>
<feature type="binding site" evidence="1">
    <location>
        <position position="468"/>
    </location>
    <ligand>
        <name>Mg(2+)</name>
        <dbReference type="ChEBI" id="CHEBI:18420"/>
    </ligand>
</feature>
<feature type="binding site" evidence="1">
    <location>
        <position position="470"/>
    </location>
    <ligand>
        <name>Mg(2+)</name>
        <dbReference type="ChEBI" id="CHEBI:18420"/>
    </ligand>
</feature>
<feature type="binding site" evidence="1">
    <location>
        <position position="809"/>
    </location>
    <ligand>
        <name>Zn(2+)</name>
        <dbReference type="ChEBI" id="CHEBI:29105"/>
        <label>2</label>
    </ligand>
</feature>
<feature type="binding site" evidence="1">
    <location>
        <position position="883"/>
    </location>
    <ligand>
        <name>Zn(2+)</name>
        <dbReference type="ChEBI" id="CHEBI:29105"/>
        <label>2</label>
    </ligand>
</feature>
<feature type="binding site" evidence="1">
    <location>
        <position position="890"/>
    </location>
    <ligand>
        <name>Zn(2+)</name>
        <dbReference type="ChEBI" id="CHEBI:29105"/>
        <label>2</label>
    </ligand>
</feature>
<feature type="binding site" evidence="1">
    <location>
        <position position="893"/>
    </location>
    <ligand>
        <name>Zn(2+)</name>
        <dbReference type="ChEBI" id="CHEBI:29105"/>
        <label>2</label>
    </ligand>
</feature>
<dbReference type="EC" id="2.7.7.6" evidence="1"/>
<dbReference type="EMBL" id="CP000112">
    <property type="protein sequence ID" value="ABB39792.1"/>
    <property type="molecule type" value="Genomic_DNA"/>
</dbReference>
<dbReference type="RefSeq" id="WP_011368765.1">
    <property type="nucleotide sequence ID" value="NC_007519.1"/>
</dbReference>
<dbReference type="SMR" id="Q30X04"/>
<dbReference type="STRING" id="207559.Dde_2998"/>
<dbReference type="KEGG" id="dde:Dde_2998"/>
<dbReference type="eggNOG" id="COG0086">
    <property type="taxonomic scope" value="Bacteria"/>
</dbReference>
<dbReference type="HOGENOM" id="CLU_000524_3_1_7"/>
<dbReference type="Proteomes" id="UP000002710">
    <property type="component" value="Chromosome"/>
</dbReference>
<dbReference type="GO" id="GO:0000428">
    <property type="term" value="C:DNA-directed RNA polymerase complex"/>
    <property type="evidence" value="ECO:0007669"/>
    <property type="project" value="UniProtKB-KW"/>
</dbReference>
<dbReference type="GO" id="GO:0003677">
    <property type="term" value="F:DNA binding"/>
    <property type="evidence" value="ECO:0007669"/>
    <property type="project" value="UniProtKB-UniRule"/>
</dbReference>
<dbReference type="GO" id="GO:0003899">
    <property type="term" value="F:DNA-directed RNA polymerase activity"/>
    <property type="evidence" value="ECO:0007669"/>
    <property type="project" value="UniProtKB-UniRule"/>
</dbReference>
<dbReference type="GO" id="GO:0000287">
    <property type="term" value="F:magnesium ion binding"/>
    <property type="evidence" value="ECO:0007669"/>
    <property type="project" value="UniProtKB-UniRule"/>
</dbReference>
<dbReference type="GO" id="GO:0008270">
    <property type="term" value="F:zinc ion binding"/>
    <property type="evidence" value="ECO:0007669"/>
    <property type="project" value="UniProtKB-UniRule"/>
</dbReference>
<dbReference type="GO" id="GO:0006351">
    <property type="term" value="P:DNA-templated transcription"/>
    <property type="evidence" value="ECO:0007669"/>
    <property type="project" value="UniProtKB-UniRule"/>
</dbReference>
<dbReference type="CDD" id="cd02655">
    <property type="entry name" value="RNAP_beta'_C"/>
    <property type="match status" value="1"/>
</dbReference>
<dbReference type="CDD" id="cd01609">
    <property type="entry name" value="RNAP_beta'_N"/>
    <property type="match status" value="1"/>
</dbReference>
<dbReference type="FunFam" id="1.10.132.30:FF:000003">
    <property type="entry name" value="DNA-directed RNA polymerase subunit beta"/>
    <property type="match status" value="1"/>
</dbReference>
<dbReference type="FunFam" id="1.10.40.90:FF:000001">
    <property type="entry name" value="DNA-directed RNA polymerase subunit beta"/>
    <property type="match status" value="1"/>
</dbReference>
<dbReference type="Gene3D" id="1.10.132.30">
    <property type="match status" value="1"/>
</dbReference>
<dbReference type="Gene3D" id="1.10.150.390">
    <property type="match status" value="1"/>
</dbReference>
<dbReference type="Gene3D" id="1.10.1790.20">
    <property type="match status" value="1"/>
</dbReference>
<dbReference type="Gene3D" id="1.10.40.90">
    <property type="match status" value="1"/>
</dbReference>
<dbReference type="Gene3D" id="2.40.40.20">
    <property type="match status" value="1"/>
</dbReference>
<dbReference type="Gene3D" id="2.40.50.100">
    <property type="match status" value="3"/>
</dbReference>
<dbReference type="Gene3D" id="4.10.860.120">
    <property type="entry name" value="RNA polymerase II, clamp domain"/>
    <property type="match status" value="1"/>
</dbReference>
<dbReference type="Gene3D" id="1.10.274.100">
    <property type="entry name" value="RNA polymerase Rpb1, domain 3"/>
    <property type="match status" value="2"/>
</dbReference>
<dbReference type="HAMAP" id="MF_01322">
    <property type="entry name" value="RNApol_bact_RpoC"/>
    <property type="match status" value="1"/>
</dbReference>
<dbReference type="InterPro" id="IPR045867">
    <property type="entry name" value="DNA-dir_RpoC_beta_prime"/>
</dbReference>
<dbReference type="InterPro" id="IPR012754">
    <property type="entry name" value="DNA-dir_RpoC_beta_prime_bact"/>
</dbReference>
<dbReference type="InterPro" id="IPR000722">
    <property type="entry name" value="RNA_pol_asu"/>
</dbReference>
<dbReference type="InterPro" id="IPR006592">
    <property type="entry name" value="RNA_pol_N"/>
</dbReference>
<dbReference type="InterPro" id="IPR007080">
    <property type="entry name" value="RNA_pol_Rpb1_1"/>
</dbReference>
<dbReference type="InterPro" id="IPR007066">
    <property type="entry name" value="RNA_pol_Rpb1_3"/>
</dbReference>
<dbReference type="InterPro" id="IPR042102">
    <property type="entry name" value="RNA_pol_Rpb1_3_sf"/>
</dbReference>
<dbReference type="InterPro" id="IPR007083">
    <property type="entry name" value="RNA_pol_Rpb1_4"/>
</dbReference>
<dbReference type="InterPro" id="IPR007081">
    <property type="entry name" value="RNA_pol_Rpb1_5"/>
</dbReference>
<dbReference type="InterPro" id="IPR044893">
    <property type="entry name" value="RNA_pol_Rpb1_clamp_domain"/>
</dbReference>
<dbReference type="InterPro" id="IPR038120">
    <property type="entry name" value="Rpb1_funnel_sf"/>
</dbReference>
<dbReference type="NCBIfam" id="TIGR02386">
    <property type="entry name" value="rpoC_TIGR"/>
    <property type="match status" value="1"/>
</dbReference>
<dbReference type="PANTHER" id="PTHR19376">
    <property type="entry name" value="DNA-DIRECTED RNA POLYMERASE"/>
    <property type="match status" value="1"/>
</dbReference>
<dbReference type="PANTHER" id="PTHR19376:SF54">
    <property type="entry name" value="DNA-DIRECTED RNA POLYMERASE SUBUNIT BETA"/>
    <property type="match status" value="1"/>
</dbReference>
<dbReference type="Pfam" id="PF04997">
    <property type="entry name" value="RNA_pol_Rpb1_1"/>
    <property type="match status" value="1"/>
</dbReference>
<dbReference type="Pfam" id="PF00623">
    <property type="entry name" value="RNA_pol_Rpb1_2"/>
    <property type="match status" value="2"/>
</dbReference>
<dbReference type="Pfam" id="PF04983">
    <property type="entry name" value="RNA_pol_Rpb1_3"/>
    <property type="match status" value="1"/>
</dbReference>
<dbReference type="Pfam" id="PF05000">
    <property type="entry name" value="RNA_pol_Rpb1_4"/>
    <property type="match status" value="1"/>
</dbReference>
<dbReference type="Pfam" id="PF04998">
    <property type="entry name" value="RNA_pol_Rpb1_5"/>
    <property type="match status" value="1"/>
</dbReference>
<dbReference type="SMART" id="SM00663">
    <property type="entry name" value="RPOLA_N"/>
    <property type="match status" value="1"/>
</dbReference>
<dbReference type="SUPFAM" id="SSF64484">
    <property type="entry name" value="beta and beta-prime subunits of DNA dependent RNA-polymerase"/>
    <property type="match status" value="1"/>
</dbReference>
<gene>
    <name evidence="1" type="primary">rpoC</name>
    <name type="ordered locus">Dde_2998</name>
</gene>
<name>RPOC_OLEA2</name>
<sequence>MTLDDLFSMRGTAAGQTNIRNLKAMQISIASPESIREWSYGEVKKPETINYRTFKPERDGLFCAKIFGPVKDYECNCGKYKRMKHRGIVCEKCGVEVIASKVRRERMGHIELAAPVAHIWFLKTLPSKIGTLLDMTMADLEKVLYFDSYIVLDPGSTSLAKLQVISEDQYLQIIDHYGEDALVVGMGAEAIRSLLEELNLEALRAELREESQSTRSQTKKKKLTKRLKIVEAFLESDNKPEWMVMEVVPVIPPELRPLVPLDGGRFATSDLNDLYRRVINRNNRLKRLMELGAPDIIIRNEKRMLQESVDALFDNGRRGRAITGTNGRPLKSLSDMIKGKQGRFRQNLLGKRVDYSGRSVIVVGPKLKLHQCGLPKKMALELFKPFIYSKLEERGLASTIKSAKKMVEREELVVWDILEEVVREYPILLNRAPTLHRLGIQAFEPLLVEGKAIQLHPLVCAAYNADFDGDQMAVHVPLSVEAQIECRVLMMSTNNILSPANGTPVIVPSQDIVLGLYYMTVERSFEKGEGMAFCAPWEVVAAYDAGSISLHARIKVRMPDGRLLNTTPGRIMVGEVLPEGVHFDLVNTVLTKKNIARLVGNAYRDAGTKATVLLCDRLKDIGYEFATRAGVTIGVKDMTIPQSKKGILADSQAEVDNIERQYRDGIITRTEKYNKVVDVWTKATQDISQEMIKEISYDVMRDEKTGKEELNQSFNPIFMMSNSGARGNQDQMRQLAGMRGLMAKPSGEIIETPITSCFREGLSVLQYFTSTHGARKGLADTALKTANSGYLTRRLVDVVQDVIISEHDCGTVDGLEVGHLIKGGDIKMRLAERVLGRVTLYPVTDPETTEVLFPANTLIDENVAKKLDEAGINSLHIRSALTCRSDRGVCAMCYGRDLARGHVVNIGETVGIIAAQSIGEPGTQLTMRTFHIGGTASREIERSNIQAQYTGRAVLYRVKSVRNKDGQHMVMGKSGQVGIVDEQGREREKYVLPSGAKLHVEEGQEVKKGQLLAEWDPFNEPFVSEVDGLVKFTDIIEGKTVQEKADEATQMTTQTIIEYRTTNFRPAVALCDADGVVKTRPESNIPASYSLPVGAILMVRDGQEITAGDIIARKPRESSKTKDIVGGLPRVAELFEVRKPKDMAVVSQIDGIVTFAGETKGKRKLVVTPETGDEKEYLVPKGKHITVTDGDFVEAGEMLTEGHPELHDILGVKGEKYLANYLVEEIQDVYRFQGVGIDDKHIEVIVRQMLKKVTVLDPGQTSFLVGEQVDKAEFRIENQKAIEEGRTPATAEPLVLGITQASLTTSSFISAASFQETTKVLTEASLRGKNDHLRGLKENVIVGRLIPAGTGYREYVHSDISVPEQKERPDRFLEELVGAPQPVVED</sequence>
<protein>
    <recommendedName>
        <fullName evidence="1">DNA-directed RNA polymerase subunit beta'</fullName>
        <shortName evidence="1">RNAP subunit beta'</shortName>
        <ecNumber evidence="1">2.7.7.6</ecNumber>
    </recommendedName>
    <alternativeName>
        <fullName evidence="1">RNA polymerase subunit beta'</fullName>
    </alternativeName>
    <alternativeName>
        <fullName evidence="1">Transcriptase subunit beta'</fullName>
    </alternativeName>
</protein>
<evidence type="ECO:0000255" key="1">
    <source>
        <dbReference type="HAMAP-Rule" id="MF_01322"/>
    </source>
</evidence>
<accession>Q30X04</accession>
<proteinExistence type="inferred from homology"/>